<protein>
    <recommendedName>
        <fullName>Genome polyprotein 2</fullName>
    </recommendedName>
    <component>
        <recommendedName>
            <fullName>Helper component proteinase</fullName>
            <shortName>HC-pro</shortName>
            <ecNumber>3.4.22.45</ecNumber>
        </recommendedName>
    </component>
    <component>
        <recommendedName>
            <fullName>70 kDa protein</fullName>
        </recommendedName>
    </component>
</protein>
<sequence>MMMNSMIRQGWQQVLRRFSIPTSGDRLIVSNSTDQPIGLFGAFDTSLQTLSQVTNDPEVLKQKSNIPTHLDVASVLEASPRSFPWVFLTNSFCTFGGSIHAQNLQAFATAEFKSGFCYMNLLIPLSFDIIDAHADSFRGFVEQLPDTLGAYPSLSMVLNVMLHAATRFPEIVASPIPTIAFDAESLQFHVTDKRGVPGMWNILKACRVYELLSLAADGIGCEYMLYPVGAAPQYSFWKKSMDHFTSDRFVEFLAMQDLLASALEQDYATHDARDALLSALQNAGYTNVVARERRFPNGHDPSIVWLNLSEAPISEKLTELKRYLLVGHRSDDTADITHNVHQHVFEVLKTMSVQFSKTTNAYNRARFEVNHKVIWNAEYGRGPQQNAELEALVLFLNRQSLEIENILHRTTSPVVVTSWKPDVPPAAPEIKEEEPTHAIATPITEAPSHVTPVEVVNLPPTRSYWAETLVGILTAILGTVFAFLTRALIRAKRLRRKSTFPWVTLNSGDDDDDQSGGGGGGPQTPGGQPPVPHTRGTHQSRFSVQDIASDTSLLSVDLDEDTLSQYDETFQKIRRALFETSFADILQNSARWISTLEAMALADGNAPYTLLAQYLNGIEEAYTNFRNTGHISRATLSGFFALEDNLRAAGIAFGTTTPTQTIQNQFADSPARRWKTRFEQIACELGDASIKSLADLADIIDTERERGDLTQFDVLAASSISSLCRAVRIISDTTDPNAQLALVENATAMQNNINAILGTNVSIPFLSATRRLLITRRVQEAGAESRSGATPETVQQLADAELAKIVSEANMYNEMAASQRDIANATREATIREHVLSPVNALANVGMAAAFFRSGGLRSRAFNPAMPTMPGGPAAAGRPMFQAFRGRGHRLNR</sequence>
<accession>Q65329</accession>
<reference key="1">
    <citation type="journal article" date="1994" name="Eur. J. Plant Pathol.">
        <title>The complete nucleotide sequence of RNA2 of barley mild mosaic virus (BaMMV).</title>
        <authorList>
            <person name="Timpe U."/>
            <person name="Kuehne T."/>
        </authorList>
        <dbReference type="AGRICOLA" id="IND20480706"/>
    </citation>
    <scope>NUCLEOTIDE SEQUENCE [GENOMIC RNA]</scope>
</reference>
<proteinExistence type="inferred from homology"/>
<keyword id="KW-0378">Hydrolase</keyword>
<keyword id="KW-0645">Protease</keyword>
<keyword id="KW-0788">Thiol protease</keyword>
<evidence type="ECO:0000255" key="1"/>
<evidence type="ECO:0000255" key="2">
    <source>
        <dbReference type="PROSITE-ProRule" id="PRU01080"/>
    </source>
</evidence>
<evidence type="ECO:0000256" key="3">
    <source>
        <dbReference type="SAM" id="MobiDB-lite"/>
    </source>
</evidence>
<evidence type="ECO:0000305" key="4"/>
<organism>
    <name type="scientific">Barley mild mosaic virus (strain ASL)</name>
    <name type="common">BaMMV</name>
    <dbReference type="NCBI Taxonomy" id="103899"/>
    <lineage>
        <taxon>Viruses</taxon>
        <taxon>Riboviria</taxon>
        <taxon>Orthornavirae</taxon>
        <taxon>Pisuviricota</taxon>
        <taxon>Stelpaviricetes</taxon>
        <taxon>Patatavirales</taxon>
        <taxon>Potyviridae</taxon>
        <taxon>Bymovirus</taxon>
        <taxon>Barley mild mosaic virus</taxon>
    </lineage>
</organism>
<comment type="catalytic activity">
    <reaction>
        <text>Hydrolyzes a Gly-|-Gly bond at its own C-terminus, commonly in the sequence -Tyr-Xaa-Val-Gly-|-Gly, in the processing of the potyviral polyprotein.</text>
        <dbReference type="EC" id="3.4.22.45"/>
    </reaction>
</comment>
<comment type="PTM">
    <text evidence="4">The viral RNA2 of bymoviruses is expressed as a single polyprotein which undergoes post-translational proteolytic processing resulting in the production of at least two individual proteins. The HC-pro cleaves its C-terminus autocatalytically (Potential).</text>
</comment>
<comment type="similarity">
    <text evidence="4">Belongs to the bymoviruses polyprotein 2 family.</text>
</comment>
<feature type="chain" id="PRO_0000040558" description="Helper component proteinase" evidence="1">
    <location>
        <begin position="1"/>
        <end position="229"/>
    </location>
</feature>
<feature type="chain" id="PRO_0000040559" description="70 kDa protein">
    <location>
        <begin position="230"/>
        <end position="893"/>
    </location>
</feature>
<feature type="domain" description="Peptidase C6" evidence="2">
    <location>
        <begin position="109"/>
        <end position="229"/>
    </location>
</feature>
<feature type="region of interest" description="Disordered" evidence="3">
    <location>
        <begin position="502"/>
        <end position="539"/>
    </location>
</feature>
<feature type="compositionally biased region" description="Gly residues" evidence="3">
    <location>
        <begin position="515"/>
        <end position="524"/>
    </location>
</feature>
<feature type="active site" description="For helper component proteinase activity" evidence="2">
    <location>
        <position position="117"/>
    </location>
</feature>
<feature type="active site" description="For helper component proteinase activity" evidence="2">
    <location>
        <position position="189"/>
    </location>
</feature>
<feature type="site" description="Cleavage; by autolysis" evidence="2">
    <location>
        <begin position="229"/>
        <end position="230"/>
    </location>
</feature>
<gene>
    <name type="primary">RNA2</name>
</gene>
<organismHost>
    <name type="scientific">Hordeum vulgare</name>
    <name type="common">Barley</name>
    <dbReference type="NCBI Taxonomy" id="4513"/>
</organismHost>
<dbReference type="EC" id="3.4.22.45"/>
<dbReference type="EMBL" id="X75933">
    <property type="protein sequence ID" value="CAA53537.1"/>
    <property type="molecule type" value="Genomic_RNA"/>
</dbReference>
<dbReference type="SMR" id="Q65329"/>
<dbReference type="MEROPS" id="C06.002"/>
<dbReference type="GO" id="GO:0004197">
    <property type="term" value="F:cysteine-type endopeptidase activity"/>
    <property type="evidence" value="ECO:0007669"/>
    <property type="project" value="InterPro"/>
</dbReference>
<dbReference type="GO" id="GO:0005198">
    <property type="term" value="F:structural molecule activity"/>
    <property type="evidence" value="ECO:0007669"/>
    <property type="project" value="InterPro"/>
</dbReference>
<dbReference type="GO" id="GO:0006508">
    <property type="term" value="P:proteolysis"/>
    <property type="evidence" value="ECO:0007669"/>
    <property type="project" value="UniProtKB-KW"/>
</dbReference>
<dbReference type="Gene3D" id="3.90.70.150">
    <property type="entry name" value="Helper component proteinase"/>
    <property type="match status" value="1"/>
</dbReference>
<dbReference type="Gene3D" id="1.20.120.70">
    <property type="entry name" value="Tobacco mosaic virus-like, coat protein"/>
    <property type="match status" value="1"/>
</dbReference>
<dbReference type="InterPro" id="IPR001456">
    <property type="entry name" value="HC-pro"/>
</dbReference>
<dbReference type="InterPro" id="IPR031159">
    <property type="entry name" value="HC_PRO_CPD_dom"/>
</dbReference>
<dbReference type="InterPro" id="IPR042308">
    <property type="entry name" value="HC_PRO_CPD_sf"/>
</dbReference>
<dbReference type="InterPro" id="IPR001337">
    <property type="entry name" value="TMV-like_coat"/>
</dbReference>
<dbReference type="InterPro" id="IPR036417">
    <property type="entry name" value="TMV-like_coat_sf"/>
</dbReference>
<dbReference type="Pfam" id="PF00851">
    <property type="entry name" value="Peptidase_C6"/>
    <property type="match status" value="1"/>
</dbReference>
<dbReference type="Pfam" id="PF00721">
    <property type="entry name" value="TMV_coat"/>
    <property type="match status" value="1"/>
</dbReference>
<dbReference type="SUPFAM" id="SSF47195">
    <property type="entry name" value="TMV-like viral coat proteins"/>
    <property type="match status" value="1"/>
</dbReference>
<dbReference type="PROSITE" id="PS51744">
    <property type="entry name" value="HC_PRO_CPD"/>
    <property type="match status" value="1"/>
</dbReference>
<name>POL2_BAMMA</name>